<accession>E1BNG3</accession>
<feature type="chain" id="PRO_0000416914" description="Activating signal cointegrator 1 complex subunit 3">
    <location>
        <begin position="1"/>
        <end position="2201"/>
    </location>
</feature>
<feature type="domain" description="Helicase ATP-binding 1" evidence="3">
    <location>
        <begin position="486"/>
        <end position="669"/>
    </location>
</feature>
<feature type="domain" description="Helicase C-terminal 1" evidence="4">
    <location>
        <begin position="696"/>
        <end position="914"/>
    </location>
</feature>
<feature type="domain" description="SEC63 1">
    <location>
        <begin position="978"/>
        <end position="1287"/>
    </location>
</feature>
<feature type="domain" description="Helicase ATP-binding 2" evidence="3">
    <location>
        <begin position="1336"/>
        <end position="1511"/>
    </location>
</feature>
<feature type="domain" description="Helicase C-terminal 2" evidence="4">
    <location>
        <begin position="1544"/>
        <end position="1739"/>
    </location>
</feature>
<feature type="domain" description="SEC63 2">
    <location>
        <begin position="1812"/>
        <end position="2176"/>
    </location>
</feature>
<feature type="coiled-coil region" evidence="2">
    <location>
        <begin position="18"/>
        <end position="81"/>
    </location>
</feature>
<feature type="coiled-coil region" evidence="2">
    <location>
        <begin position="328"/>
        <end position="356"/>
    </location>
</feature>
<feature type="short sequence motif" description="DEVH box">
    <location>
        <begin position="611"/>
        <end position="614"/>
    </location>
</feature>
<feature type="short sequence motif" description="DEIH box">
    <location>
        <begin position="1453"/>
        <end position="1456"/>
    </location>
</feature>
<feature type="binding site" evidence="3">
    <location>
        <begin position="499"/>
        <end position="506"/>
    </location>
    <ligand>
        <name>ATP</name>
        <dbReference type="ChEBI" id="CHEBI:30616"/>
    </ligand>
</feature>
<feature type="binding site" evidence="3">
    <location>
        <begin position="1349"/>
        <end position="1356"/>
    </location>
    <ligand>
        <name>ATP</name>
        <dbReference type="ChEBI" id="CHEBI:30616"/>
    </ligand>
</feature>
<feature type="modified residue" description="Phosphoserine" evidence="1">
    <location>
        <position position="12"/>
    </location>
</feature>
<feature type="modified residue" description="N6-acetyllysine" evidence="1">
    <location>
        <position position="572"/>
    </location>
</feature>
<reference key="1">
    <citation type="journal article" date="2009" name="Genome Biol.">
        <title>A whole-genome assembly of the domestic cow, Bos taurus.</title>
        <authorList>
            <person name="Zimin A.V."/>
            <person name="Delcher A.L."/>
            <person name="Florea L."/>
            <person name="Kelley D.R."/>
            <person name="Schatz M.C."/>
            <person name="Puiu D."/>
            <person name="Hanrahan F."/>
            <person name="Pertea G."/>
            <person name="Van Tassell C.P."/>
            <person name="Sonstegard T.S."/>
            <person name="Marcais G."/>
            <person name="Roberts M."/>
            <person name="Subramanian P."/>
            <person name="Yorke J.A."/>
            <person name="Salzberg S.L."/>
        </authorList>
    </citation>
    <scope>NUCLEOTIDE SEQUENCE [LARGE SCALE GENOMIC DNA]</scope>
    <source>
        <strain>Hereford</strain>
    </source>
</reference>
<gene>
    <name type="primary">ascc3</name>
</gene>
<sequence length="2201" mass="250765">MALPRLTGALRSFSNVTKQDNYNEEVADLQMKRSKLHEQIVGLDLTWMKIVKFLNEKLEKSEMQRVNEDLKAILQAAKQIVGTDNGKEAIESAAAFLFKTFHLKDCVGHQETKAIKQMFGPFPSSSATAACDATNRITSHFCKDSLTALVQMTTDENGDRVLFGKNLAFSFDMHDLDHFDELPINGESQKTISLDYKKFLTDHLQDHSTLNRKPAEKTNDSFLWCEVEKYLNATLNEMAEATRIEDLCCTLYDMLASVKSGDELQDELFELLGPDGLELIEKLLQNRVTIVDRFLNSSNDHKLQALQDNCKKILGENAKPNYGCQVTIQSEQEKQLMKQYRREEKRIARREKKAGEDGEATEGLLCFDPKELRIHREQALMNARNVPILSRQRDTDVEKIRYPHVYDSQAEAMRTSAFIAGAKMILPEGIQRENNKIYEEVKIPYTEPMPIGFEEKPVYIQDLDEIGQLAFKGMRRLNRIQSIVFETAYNTNENMLICAPTGAGKTNIAMLTVLHEIRQHFQQGVIKKNEFKIVYVAPMKALAAEMTNYFSKRLEPLGIVVKELTGDMQLSKNEILRTQMLVTTPEKWDVVTRKSVGDVALSQIVKLLILDEVHLLHEDRGPVLESIVARTLRQVESTQSMIRILGLSATLPNYLDVATFLHVNPCIGLFFFDGRFRPVPLGQTFLGIKSANKVQQLNNMDEVCYESVLKQVKAGHQVMVFVHARNATVRTAMSLIERAKNNGQICYFLPTQGPEYGHAEKQVQKSRNRQVRELFPDGFSIHHAGMLRQDRNLVESLFSNGHIKVLVCTATLAWGVNLPAHAVIIKGTQIYAAKRGSFVDLGILDVMQIFGRAGRPQFDKFGEGIIITTHDKLSHYLSLLTQQNPIESQFLESLADNLNAEIALGTVTNVEEAVKWISYTYLYVRMRANPLVYGISHKAYQIDPTLAKHREQLVIEVGRKLDKARMIRFEERTGYFSSTDLGRTASHYYIKYNTIETFNELFDAHKTESDIFAIVSKAEEFDQIKVREEEIEELDTLLSNFCELSAPGGVENSYGKINILLQTYISRGEVDSFSLISDSAYVAQNAARIVRALFEIALRKRWPAMTYRLLNLSKVIDKRLWGWTSPLRQFSVLPPHILTRLEEKNLTVDKLKDMRKDEIGHILHHVNIGLKVKQCVHQIPSVTMEASIQPITRTVLRVTLSISPDFSWNDQVHGTVGEPWWIWVEDPTNDHIYHSEYFLVLKKQVISKEAQLLVFTIPIFEPLPSQYYIRAVSDRWLGAEAVCIINFQHLILPERHPPHTELLDLQPLPVTALGCEAYEALYNFSHFNPVQTQIFHTLYHTDCNVLLGAPTGSGKTVAAELAIFRVFNKYPTSKAVYIAPLKALVRERMDDWKVRIEEKLGKKVIELTGDVTPDMKSIAKADLIVTTPEKWDGVSRSWQNRNYVKQVTILIIDEIHLLGEERGPVLEVIVSRTNFISSHTEKPVRIVGLSTALANARDLADWLNIRQMGLFNFRPSVRPVPLEVHIQGFPGQHYCPRMASMNKPTFQAIRSHSPAKPVLIFVSSRRQTRLTALELIAFLATEEDPKQWLNMDEREMENIIGTIRDSNLKLTLAFGIGMHHAGLHERDRKTVEELFVNCKIQVLIATSTLAWGVNFPAHLVIIKGTEYYDGKTRRYVDFPITDVLQMMGRAGRPQFDDQGKAVILVHDIKKDFYKKFLYEPFPVESSLLGVLSDHLNAEIAGGTITSKQDAMDYITWTYFFRRLIMNPSYYNLSDVSHDSVNKFLSNLVEKSLVELEHSYCIEIGEDNRSIEPLTYGRIASYYYLKHQTVKMFKERLKPECGTEELLSILSDAEEYTDLPVRHNEDHMNSELAKCLPLESNPHSFDSPHTKAHLLLQAHLSRTMLPCPDYDTDTKTVLDQALRVCQAMLDVAAHQGWLVTVLNITSLVQMVIQGRWLKDSSLLTIPHIENHHLHIFRKWSPGMKGPHAGYHGSIECLPELIHACAGKDHVFSSMIEKELPAPKMKQAWNFLSHLPVIDVGLSVKGWWDDAAEGHDEISITTVASDKHSDNRWVRLHADQEYVLQVSLQRVSLGFHKGKQDSHAVTPRFPKSKDEGWFLILGEVDKRELIALKRVGYVRSHHMVSISFYTPEVPGRYIYTLYFMSDCYLGLDQQYDIHLHVTPASISAQADEISDALTDLKVK</sequence>
<protein>
    <recommendedName>
        <fullName>Activating signal cointegrator 1 complex subunit 3</fullName>
        <ecNumber evidence="1">5.6.2.4</ecNumber>
    </recommendedName>
</protein>
<dbReference type="EC" id="5.6.2.4" evidence="1"/>
<dbReference type="EMBL" id="DAAA02026160">
    <property type="status" value="NOT_ANNOTATED_CDS"/>
    <property type="molecule type" value="Genomic_DNA"/>
</dbReference>
<dbReference type="EMBL" id="DAAA02026161">
    <property type="status" value="NOT_ANNOTATED_CDS"/>
    <property type="molecule type" value="Genomic_DNA"/>
</dbReference>
<dbReference type="EMBL" id="DAAA02026162">
    <property type="status" value="NOT_ANNOTATED_CDS"/>
    <property type="molecule type" value="Genomic_DNA"/>
</dbReference>
<dbReference type="EMBL" id="DAAA02026163">
    <property type="status" value="NOT_ANNOTATED_CDS"/>
    <property type="molecule type" value="Genomic_DNA"/>
</dbReference>
<dbReference type="EMBL" id="DAAA02026164">
    <property type="status" value="NOT_ANNOTATED_CDS"/>
    <property type="molecule type" value="Genomic_DNA"/>
</dbReference>
<dbReference type="EMBL" id="DAAA02026165">
    <property type="status" value="NOT_ANNOTATED_CDS"/>
    <property type="molecule type" value="Genomic_DNA"/>
</dbReference>
<dbReference type="EMBL" id="DAAA02026166">
    <property type="status" value="NOT_ANNOTATED_CDS"/>
    <property type="molecule type" value="Genomic_DNA"/>
</dbReference>
<dbReference type="EMBL" id="DAAA02026167">
    <property type="status" value="NOT_ANNOTATED_CDS"/>
    <property type="molecule type" value="Genomic_DNA"/>
</dbReference>
<dbReference type="EMBL" id="DAAA02026168">
    <property type="status" value="NOT_ANNOTATED_CDS"/>
    <property type="molecule type" value="Genomic_DNA"/>
</dbReference>
<dbReference type="EMBL" id="DAAA02026169">
    <property type="status" value="NOT_ANNOTATED_CDS"/>
    <property type="molecule type" value="Genomic_DNA"/>
</dbReference>
<dbReference type="EMBL" id="DAAA02026170">
    <property type="status" value="NOT_ANNOTATED_CDS"/>
    <property type="molecule type" value="Genomic_DNA"/>
</dbReference>
<dbReference type="EMBL" id="DAAA02026171">
    <property type="status" value="NOT_ANNOTATED_CDS"/>
    <property type="molecule type" value="Genomic_DNA"/>
</dbReference>
<dbReference type="EMBL" id="DAAA02026172">
    <property type="status" value="NOT_ANNOTATED_CDS"/>
    <property type="molecule type" value="Genomic_DNA"/>
</dbReference>
<dbReference type="EMBL" id="DAAA02026173">
    <property type="status" value="NOT_ANNOTATED_CDS"/>
    <property type="molecule type" value="Genomic_DNA"/>
</dbReference>
<dbReference type="EMBL" id="DAAA02026174">
    <property type="status" value="NOT_ANNOTATED_CDS"/>
    <property type="molecule type" value="Genomic_DNA"/>
</dbReference>
<dbReference type="EMBL" id="DAAA02026175">
    <property type="status" value="NOT_ANNOTATED_CDS"/>
    <property type="molecule type" value="Genomic_DNA"/>
</dbReference>
<dbReference type="EMBL" id="DAAA02026176">
    <property type="status" value="NOT_ANNOTATED_CDS"/>
    <property type="molecule type" value="Genomic_DNA"/>
</dbReference>
<dbReference type="EMBL" id="DAAA02026177">
    <property type="status" value="NOT_ANNOTATED_CDS"/>
    <property type="molecule type" value="Genomic_DNA"/>
</dbReference>
<dbReference type="EMBL" id="DAAA02026178">
    <property type="status" value="NOT_ANNOTATED_CDS"/>
    <property type="molecule type" value="Genomic_DNA"/>
</dbReference>
<dbReference type="EMBL" id="DAAA02026179">
    <property type="status" value="NOT_ANNOTATED_CDS"/>
    <property type="molecule type" value="Genomic_DNA"/>
</dbReference>
<dbReference type="EMBL" id="DAAA02026180">
    <property type="status" value="NOT_ANNOTATED_CDS"/>
    <property type="molecule type" value="Genomic_DNA"/>
</dbReference>
<dbReference type="EMBL" id="DAAA02026181">
    <property type="status" value="NOT_ANNOTATED_CDS"/>
    <property type="molecule type" value="Genomic_DNA"/>
</dbReference>
<dbReference type="EMBL" id="DAAA02026182">
    <property type="status" value="NOT_ANNOTATED_CDS"/>
    <property type="molecule type" value="Genomic_DNA"/>
</dbReference>
<dbReference type="EMBL" id="DAAA02026183">
    <property type="status" value="NOT_ANNOTATED_CDS"/>
    <property type="molecule type" value="Genomic_DNA"/>
</dbReference>
<dbReference type="EMBL" id="DAAA02026184">
    <property type="status" value="NOT_ANNOTATED_CDS"/>
    <property type="molecule type" value="Genomic_DNA"/>
</dbReference>
<dbReference type="EMBL" id="DAAA02026185">
    <property type="status" value="NOT_ANNOTATED_CDS"/>
    <property type="molecule type" value="Genomic_DNA"/>
</dbReference>
<dbReference type="EMBL" id="DAAA02026186">
    <property type="status" value="NOT_ANNOTATED_CDS"/>
    <property type="molecule type" value="Genomic_DNA"/>
</dbReference>
<dbReference type="EMBL" id="DAAA02026187">
    <property type="status" value="NOT_ANNOTATED_CDS"/>
    <property type="molecule type" value="Genomic_DNA"/>
</dbReference>
<dbReference type="EMBL" id="DAAA02026188">
    <property type="status" value="NOT_ANNOTATED_CDS"/>
    <property type="molecule type" value="Genomic_DNA"/>
</dbReference>
<dbReference type="EMBL" id="DAAA02026189">
    <property type="status" value="NOT_ANNOTATED_CDS"/>
    <property type="molecule type" value="Genomic_DNA"/>
</dbReference>
<dbReference type="EMBL" id="DAAA02026190">
    <property type="status" value="NOT_ANNOTATED_CDS"/>
    <property type="molecule type" value="Genomic_DNA"/>
</dbReference>
<dbReference type="EMBL" id="DAAA02026191">
    <property type="status" value="NOT_ANNOTATED_CDS"/>
    <property type="molecule type" value="Genomic_DNA"/>
</dbReference>
<dbReference type="EMBL" id="DAAA02026192">
    <property type="status" value="NOT_ANNOTATED_CDS"/>
    <property type="molecule type" value="Genomic_DNA"/>
</dbReference>
<dbReference type="EMBL" id="DAAA02026193">
    <property type="status" value="NOT_ANNOTATED_CDS"/>
    <property type="molecule type" value="Genomic_DNA"/>
</dbReference>
<dbReference type="EMBL" id="DAAA02026194">
    <property type="status" value="NOT_ANNOTATED_CDS"/>
    <property type="molecule type" value="Genomic_DNA"/>
</dbReference>
<dbReference type="EMBL" id="DAAA02026195">
    <property type="status" value="NOT_ANNOTATED_CDS"/>
    <property type="molecule type" value="Genomic_DNA"/>
</dbReference>
<dbReference type="EMBL" id="DAAA02026196">
    <property type="status" value="NOT_ANNOTATED_CDS"/>
    <property type="molecule type" value="Genomic_DNA"/>
</dbReference>
<dbReference type="EMBL" id="DAAA02026197">
    <property type="status" value="NOT_ANNOTATED_CDS"/>
    <property type="molecule type" value="Genomic_DNA"/>
</dbReference>
<dbReference type="EMBL" id="DAAA02026198">
    <property type="status" value="NOT_ANNOTATED_CDS"/>
    <property type="molecule type" value="Genomic_DNA"/>
</dbReference>
<dbReference type="EMBL" id="DAAA02026199">
    <property type="status" value="NOT_ANNOTATED_CDS"/>
    <property type="molecule type" value="Genomic_DNA"/>
</dbReference>
<dbReference type="RefSeq" id="NP_001193047.1">
    <property type="nucleotide sequence ID" value="NM_001206118.1"/>
</dbReference>
<dbReference type="SMR" id="E1BNG3"/>
<dbReference type="FunCoup" id="E1BNG3">
    <property type="interactions" value="3401"/>
</dbReference>
<dbReference type="STRING" id="9913.ENSBTAP00000027294"/>
<dbReference type="PaxDb" id="9913-ENSBTAP00000027294"/>
<dbReference type="Ensembl" id="ENSBTAT00000027294.5">
    <property type="protein sequence ID" value="ENSBTAP00000027294.4"/>
    <property type="gene ID" value="ENSBTAG00000020482.7"/>
</dbReference>
<dbReference type="GeneID" id="538416"/>
<dbReference type="KEGG" id="bta:538416"/>
<dbReference type="CTD" id="10973"/>
<dbReference type="VEuPathDB" id="HostDB:ENSBTAG00000020482"/>
<dbReference type="VGNC" id="VGNC:26205">
    <property type="gene designation" value="ASCC3"/>
</dbReference>
<dbReference type="eggNOG" id="KOG0952">
    <property type="taxonomic scope" value="Eukaryota"/>
</dbReference>
<dbReference type="GeneTree" id="ENSGT00940000155377"/>
<dbReference type="HOGENOM" id="CLU_000335_2_1_1"/>
<dbReference type="InParanoid" id="E1BNG3"/>
<dbReference type="OMA" id="MCSATEF"/>
<dbReference type="OrthoDB" id="5575at2759"/>
<dbReference type="TreeFam" id="TF105778"/>
<dbReference type="Proteomes" id="UP000009136">
    <property type="component" value="Chromosome 9"/>
</dbReference>
<dbReference type="Bgee" id="ENSBTAG00000020482">
    <property type="expression patterns" value="Expressed in spiral colon and 108 other cell types or tissues"/>
</dbReference>
<dbReference type="GO" id="GO:0005829">
    <property type="term" value="C:cytosol"/>
    <property type="evidence" value="ECO:0000250"/>
    <property type="project" value="UniProtKB"/>
</dbReference>
<dbReference type="GO" id="GO:0016607">
    <property type="term" value="C:nuclear speck"/>
    <property type="evidence" value="ECO:0007669"/>
    <property type="project" value="UniProtKB-SubCell"/>
</dbReference>
<dbReference type="GO" id="GO:0005634">
    <property type="term" value="C:nucleus"/>
    <property type="evidence" value="ECO:0000250"/>
    <property type="project" value="UniProtKB"/>
</dbReference>
<dbReference type="GO" id="GO:0043138">
    <property type="term" value="F:3'-5' DNA helicase activity"/>
    <property type="evidence" value="ECO:0000250"/>
    <property type="project" value="UniProtKB"/>
</dbReference>
<dbReference type="GO" id="GO:0005524">
    <property type="term" value="F:ATP binding"/>
    <property type="evidence" value="ECO:0007669"/>
    <property type="project" value="UniProtKB-KW"/>
</dbReference>
<dbReference type="GO" id="GO:0016887">
    <property type="term" value="F:ATP hydrolysis activity"/>
    <property type="evidence" value="ECO:0000250"/>
    <property type="project" value="UniProtKB"/>
</dbReference>
<dbReference type="GO" id="GO:0003676">
    <property type="term" value="F:nucleic acid binding"/>
    <property type="evidence" value="ECO:0007669"/>
    <property type="project" value="InterPro"/>
</dbReference>
<dbReference type="GO" id="GO:0006307">
    <property type="term" value="P:DNA alkylation repair"/>
    <property type="evidence" value="ECO:0000250"/>
    <property type="project" value="UniProtKB"/>
</dbReference>
<dbReference type="GO" id="GO:0072344">
    <property type="term" value="P:rescue of stalled ribosome"/>
    <property type="evidence" value="ECO:0000250"/>
    <property type="project" value="UniProtKB"/>
</dbReference>
<dbReference type="GO" id="GO:0032790">
    <property type="term" value="P:ribosome disassembly"/>
    <property type="evidence" value="ECO:0000250"/>
    <property type="project" value="UniProtKB"/>
</dbReference>
<dbReference type="GO" id="GO:1990116">
    <property type="term" value="P:ribosome-associated ubiquitin-dependent protein catabolic process"/>
    <property type="evidence" value="ECO:0000250"/>
    <property type="project" value="UniProtKB"/>
</dbReference>
<dbReference type="CDD" id="cd18020">
    <property type="entry name" value="DEXHc_ASCC3_1"/>
    <property type="match status" value="1"/>
</dbReference>
<dbReference type="CDD" id="cd18022">
    <property type="entry name" value="DEXHc_ASCC3_2"/>
    <property type="match status" value="1"/>
</dbReference>
<dbReference type="CDD" id="cd18795">
    <property type="entry name" value="SF2_C_Ski2"/>
    <property type="match status" value="2"/>
</dbReference>
<dbReference type="FunFam" id="3.40.50.300:FF:000198">
    <property type="entry name" value="Activating signal cointegrator 1 complex subunit"/>
    <property type="match status" value="1"/>
</dbReference>
<dbReference type="FunFam" id="1.10.3380.10:FF:000002">
    <property type="entry name" value="Activating signal cointegrator 1 complex subunit 3"/>
    <property type="match status" value="1"/>
</dbReference>
<dbReference type="FunFam" id="3.40.50.300:FF:000231">
    <property type="entry name" value="Activating signal cointegrator 1 complex subunit 3"/>
    <property type="match status" value="1"/>
</dbReference>
<dbReference type="FunFam" id="1.10.150.20:FF:000028">
    <property type="entry name" value="activating signal cointegrator 1 complex subunit 3"/>
    <property type="match status" value="1"/>
</dbReference>
<dbReference type="FunFam" id="2.60.40.150:FF:000113">
    <property type="entry name" value="activating signal cointegrator 1 complex subunit 3"/>
    <property type="match status" value="1"/>
</dbReference>
<dbReference type="FunFam" id="2.60.40.150:FF:000004">
    <property type="entry name" value="RNA helicase, activating signal cointegrator 1"/>
    <property type="match status" value="1"/>
</dbReference>
<dbReference type="FunFam" id="3.40.50.300:FF:000102">
    <property type="entry name" value="RNA helicase, activating signal cointegrator 1"/>
    <property type="match status" value="1"/>
</dbReference>
<dbReference type="FunFam" id="1.10.10.10:FF:000012">
    <property type="entry name" value="U5 small nuclear ribonucleoprotein helicase"/>
    <property type="match status" value="1"/>
</dbReference>
<dbReference type="FunFam" id="1.10.10.10:FF:000024">
    <property type="entry name" value="U5 small nuclear ribonucleoprotein helicase"/>
    <property type="match status" value="1"/>
</dbReference>
<dbReference type="FunFam" id="1.10.3380.10:FF:000001">
    <property type="entry name" value="U5 small nuclear ribonucleoprotein helicase"/>
    <property type="match status" value="1"/>
</dbReference>
<dbReference type="FunFam" id="3.40.50.300:FF:000062">
    <property type="entry name" value="U5 small nuclear ribonucleoprotein helicase"/>
    <property type="match status" value="1"/>
</dbReference>
<dbReference type="Gene3D" id="1.10.150.20">
    <property type="entry name" value="5' to 3' exonuclease, C-terminal subdomain"/>
    <property type="match status" value="1"/>
</dbReference>
<dbReference type="Gene3D" id="2.60.40.150">
    <property type="entry name" value="C2 domain"/>
    <property type="match status" value="2"/>
</dbReference>
<dbReference type="Gene3D" id="3.40.50.300">
    <property type="entry name" value="P-loop containing nucleotide triphosphate hydrolases"/>
    <property type="match status" value="4"/>
</dbReference>
<dbReference type="Gene3D" id="1.10.3380.10">
    <property type="entry name" value="Sec63 N-terminal domain-like domain"/>
    <property type="match status" value="2"/>
</dbReference>
<dbReference type="Gene3D" id="1.10.10.10">
    <property type="entry name" value="Winged helix-like DNA-binding domain superfamily/Winged helix DNA-binding domain"/>
    <property type="match status" value="2"/>
</dbReference>
<dbReference type="InterPro" id="IPR003593">
    <property type="entry name" value="AAA+_ATPase"/>
</dbReference>
<dbReference type="InterPro" id="IPR035892">
    <property type="entry name" value="C2_domain_sf"/>
</dbReference>
<dbReference type="InterPro" id="IPR011545">
    <property type="entry name" value="DEAD/DEAH_box_helicase_dom"/>
</dbReference>
<dbReference type="InterPro" id="IPR050474">
    <property type="entry name" value="Hel308_SKI2-like"/>
</dbReference>
<dbReference type="InterPro" id="IPR014001">
    <property type="entry name" value="Helicase_ATP-bd"/>
</dbReference>
<dbReference type="InterPro" id="IPR001650">
    <property type="entry name" value="Helicase_C-like"/>
</dbReference>
<dbReference type="InterPro" id="IPR014756">
    <property type="entry name" value="Ig_E-set"/>
</dbReference>
<dbReference type="InterPro" id="IPR027417">
    <property type="entry name" value="P-loop_NTPase"/>
</dbReference>
<dbReference type="InterPro" id="IPR004179">
    <property type="entry name" value="Sec63-dom"/>
</dbReference>
<dbReference type="InterPro" id="IPR036388">
    <property type="entry name" value="WH-like_DNA-bd_sf"/>
</dbReference>
<dbReference type="InterPro" id="IPR036390">
    <property type="entry name" value="WH_DNA-bd_sf"/>
</dbReference>
<dbReference type="PANTHER" id="PTHR47961:SF13">
    <property type="entry name" value="ACTIVATING SIGNAL COINTEGRATOR 1 COMPLEX SUBUNIT 3"/>
    <property type="match status" value="1"/>
</dbReference>
<dbReference type="PANTHER" id="PTHR47961">
    <property type="entry name" value="DNA POLYMERASE THETA, PUTATIVE (AFU_ORTHOLOGUE AFUA_1G05260)-RELATED"/>
    <property type="match status" value="1"/>
</dbReference>
<dbReference type="Pfam" id="PF00270">
    <property type="entry name" value="DEAD"/>
    <property type="match status" value="2"/>
</dbReference>
<dbReference type="Pfam" id="PF00271">
    <property type="entry name" value="Helicase_C"/>
    <property type="match status" value="2"/>
</dbReference>
<dbReference type="Pfam" id="PF02889">
    <property type="entry name" value="Sec63"/>
    <property type="match status" value="2"/>
</dbReference>
<dbReference type="Pfam" id="PF23445">
    <property type="entry name" value="SNRNP200_wHTH"/>
    <property type="match status" value="2"/>
</dbReference>
<dbReference type="PIRSF" id="PIRSF039073">
    <property type="entry name" value="BRR2"/>
    <property type="match status" value="1"/>
</dbReference>
<dbReference type="SMART" id="SM00382">
    <property type="entry name" value="AAA"/>
    <property type="match status" value="2"/>
</dbReference>
<dbReference type="SMART" id="SM00487">
    <property type="entry name" value="DEXDc"/>
    <property type="match status" value="2"/>
</dbReference>
<dbReference type="SMART" id="SM00490">
    <property type="entry name" value="HELICc"/>
    <property type="match status" value="2"/>
</dbReference>
<dbReference type="SMART" id="SM00973">
    <property type="entry name" value="Sec63"/>
    <property type="match status" value="2"/>
</dbReference>
<dbReference type="SUPFAM" id="SSF81296">
    <property type="entry name" value="E set domains"/>
    <property type="match status" value="1"/>
</dbReference>
<dbReference type="SUPFAM" id="SSF52540">
    <property type="entry name" value="P-loop containing nucleoside triphosphate hydrolases"/>
    <property type="match status" value="3"/>
</dbReference>
<dbReference type="SUPFAM" id="SSF158702">
    <property type="entry name" value="Sec63 N-terminal domain-like"/>
    <property type="match status" value="2"/>
</dbReference>
<dbReference type="SUPFAM" id="SSF46785">
    <property type="entry name" value="Winged helix' DNA-binding domain"/>
    <property type="match status" value="2"/>
</dbReference>
<dbReference type="PROSITE" id="PS51192">
    <property type="entry name" value="HELICASE_ATP_BIND_1"/>
    <property type="match status" value="2"/>
</dbReference>
<dbReference type="PROSITE" id="PS51194">
    <property type="entry name" value="HELICASE_CTER"/>
    <property type="match status" value="2"/>
</dbReference>
<proteinExistence type="inferred from homology"/>
<evidence type="ECO:0000250" key="1">
    <source>
        <dbReference type="UniProtKB" id="Q8N3C0"/>
    </source>
</evidence>
<evidence type="ECO:0000255" key="2"/>
<evidence type="ECO:0000255" key="3">
    <source>
        <dbReference type="PROSITE-ProRule" id="PRU00541"/>
    </source>
</evidence>
<evidence type="ECO:0000255" key="4">
    <source>
        <dbReference type="PROSITE-ProRule" id="PRU00542"/>
    </source>
</evidence>
<evidence type="ECO:0000305" key="5"/>
<organism>
    <name type="scientific">Bos taurus</name>
    <name type="common">Bovine</name>
    <dbReference type="NCBI Taxonomy" id="9913"/>
    <lineage>
        <taxon>Eukaryota</taxon>
        <taxon>Metazoa</taxon>
        <taxon>Chordata</taxon>
        <taxon>Craniata</taxon>
        <taxon>Vertebrata</taxon>
        <taxon>Euteleostomi</taxon>
        <taxon>Mammalia</taxon>
        <taxon>Eutheria</taxon>
        <taxon>Laurasiatheria</taxon>
        <taxon>Artiodactyla</taxon>
        <taxon>Ruminantia</taxon>
        <taxon>Pecora</taxon>
        <taxon>Bovidae</taxon>
        <taxon>Bovinae</taxon>
        <taxon>Bos</taxon>
    </lineage>
</organism>
<name>ASCC3_BOVIN</name>
<keyword id="KW-0007">Acetylation</keyword>
<keyword id="KW-0067">ATP-binding</keyword>
<keyword id="KW-0175">Coiled coil</keyword>
<keyword id="KW-0963">Cytoplasm</keyword>
<keyword id="KW-0227">DNA damage</keyword>
<keyword id="KW-0234">DNA repair</keyword>
<keyword id="KW-0347">Helicase</keyword>
<keyword id="KW-0378">Hydrolase</keyword>
<keyword id="KW-0413">Isomerase</keyword>
<keyword id="KW-0547">Nucleotide-binding</keyword>
<keyword id="KW-0539">Nucleus</keyword>
<keyword id="KW-0597">Phosphoprotein</keyword>
<keyword id="KW-1185">Reference proteome</keyword>
<keyword id="KW-0677">Repeat</keyword>
<comment type="function">
    <text evidence="1">ATPase involved both in DNA repair and rescue of stalled ribosomes. 3'-5' DNA helicase involved in repair of alkylated DNA: promotes DNA unwinding to generate single-stranded substrate needed for ALKBH3, enabling ALKBH3 to process alkylated N3-methylcytosine (3mC) within double-stranded regions. Also involved in activation of the ribosome quality control (RQC) pathway, a pathway that degrades nascent peptide chains during problematic translation. Drives the splitting of stalled ribosomes that are ubiquitinated in a ZNF598-dependent manner, as part of the ribosome quality control trigger (RQT) complex. Part of the ASC-1 complex that enhances NF-kappa-B, SRF and AP1 transactivation.</text>
</comment>
<comment type="catalytic activity">
    <reaction evidence="1">
        <text>Couples ATP hydrolysis with the unwinding of duplex DNA by translocating in the 3'-5' direction.</text>
        <dbReference type="EC" id="5.6.2.4"/>
    </reaction>
</comment>
<comment type="catalytic activity">
    <reaction evidence="1">
        <text>ATP + H2O = ADP + phosphate + H(+)</text>
        <dbReference type="Rhea" id="RHEA:13065"/>
        <dbReference type="ChEBI" id="CHEBI:15377"/>
        <dbReference type="ChEBI" id="CHEBI:15378"/>
        <dbReference type="ChEBI" id="CHEBI:30616"/>
        <dbReference type="ChEBI" id="CHEBI:43474"/>
        <dbReference type="ChEBI" id="CHEBI:456216"/>
        <dbReference type="EC" id="5.6.2.4"/>
    </reaction>
</comment>
<comment type="subunit">
    <text evidence="1">Identified in the ASCC complex that contains ASCC1, ASCC2 and ASCC3. Functions as a scaffolding subunit that interacts directly with both ASCC1 and ASCC2. Interacts directly with ALKBH3, and thereby recruits ALKBH3 to the ASCC complex. Part of the ASC-1/TRIP4 complex, that contains TRIP4, ASCC1, ASCC2 and ASCC3. Part of the RQT (ribosome quality control trigger) complex, that contains ASCC2, ASCC3 and TRIP4. Associates with ribosomes; recruited to collided ribosomes. Interacts with ZCCHC4. Interacts with ZNF598. Interacts with RPS3.</text>
</comment>
<comment type="subcellular location">
    <subcellularLocation>
        <location evidence="1">Nucleus</location>
    </subcellularLocation>
    <subcellularLocation>
        <location evidence="1">Nucleus speckle</location>
    </subcellularLocation>
    <subcellularLocation>
        <location evidence="1">Cytoplasm</location>
        <location evidence="1">Cytosol</location>
    </subcellularLocation>
    <text evidence="1">Colocalizes with ALKBH3 and ASCC2 in nuclear foci when cells have been exposed to alkylating agents that cause DNA damage.</text>
</comment>
<comment type="similarity">
    <text evidence="5">Belongs to the helicase family.</text>
</comment>